<reference key="1">
    <citation type="submission" date="2006-09" db="EMBL/GenBank/DDBJ databases">
        <title>Complete sequence of Rhodopseudomonas palustris BisA53.</title>
        <authorList>
            <consortium name="US DOE Joint Genome Institute"/>
            <person name="Copeland A."/>
            <person name="Lucas S."/>
            <person name="Lapidus A."/>
            <person name="Barry K."/>
            <person name="Detter J.C."/>
            <person name="Glavina del Rio T."/>
            <person name="Hammon N."/>
            <person name="Israni S."/>
            <person name="Dalin E."/>
            <person name="Tice H."/>
            <person name="Pitluck S."/>
            <person name="Chain P."/>
            <person name="Malfatti S."/>
            <person name="Shin M."/>
            <person name="Vergez L."/>
            <person name="Schmutz J."/>
            <person name="Larimer F."/>
            <person name="Land M."/>
            <person name="Hauser L."/>
            <person name="Pelletier D.A."/>
            <person name="Kyrpides N."/>
            <person name="Kim E."/>
            <person name="Harwood C.S."/>
            <person name="Oda Y."/>
            <person name="Richardson P."/>
        </authorList>
    </citation>
    <scope>NUCLEOTIDE SEQUENCE [LARGE SCALE GENOMIC DNA]</scope>
    <source>
        <strain>BisA53</strain>
    </source>
</reference>
<gene>
    <name evidence="1" type="primary">accD</name>
    <name type="ordered locus">RPE_0456</name>
</gene>
<dbReference type="EC" id="2.1.3.15" evidence="1"/>
<dbReference type="EMBL" id="CP000463">
    <property type="protein sequence ID" value="ABJ04415.1"/>
    <property type="molecule type" value="Genomic_DNA"/>
</dbReference>
<dbReference type="SMR" id="Q07UG9"/>
<dbReference type="STRING" id="316055.RPE_0456"/>
<dbReference type="KEGG" id="rpe:RPE_0456"/>
<dbReference type="eggNOG" id="COG0777">
    <property type="taxonomic scope" value="Bacteria"/>
</dbReference>
<dbReference type="HOGENOM" id="CLU_015486_1_0_5"/>
<dbReference type="OrthoDB" id="9772975at2"/>
<dbReference type="UniPathway" id="UPA00655">
    <property type="reaction ID" value="UER00711"/>
</dbReference>
<dbReference type="GO" id="GO:0009329">
    <property type="term" value="C:acetate CoA-transferase complex"/>
    <property type="evidence" value="ECO:0007669"/>
    <property type="project" value="TreeGrafter"/>
</dbReference>
<dbReference type="GO" id="GO:0003989">
    <property type="term" value="F:acetyl-CoA carboxylase activity"/>
    <property type="evidence" value="ECO:0007669"/>
    <property type="project" value="InterPro"/>
</dbReference>
<dbReference type="GO" id="GO:0005524">
    <property type="term" value="F:ATP binding"/>
    <property type="evidence" value="ECO:0007669"/>
    <property type="project" value="UniProtKB-KW"/>
</dbReference>
<dbReference type="GO" id="GO:0016743">
    <property type="term" value="F:carboxyl- or carbamoyltransferase activity"/>
    <property type="evidence" value="ECO:0007669"/>
    <property type="project" value="UniProtKB-UniRule"/>
</dbReference>
<dbReference type="GO" id="GO:0006633">
    <property type="term" value="P:fatty acid biosynthetic process"/>
    <property type="evidence" value="ECO:0007669"/>
    <property type="project" value="UniProtKB-KW"/>
</dbReference>
<dbReference type="GO" id="GO:2001295">
    <property type="term" value="P:malonyl-CoA biosynthetic process"/>
    <property type="evidence" value="ECO:0007669"/>
    <property type="project" value="UniProtKB-UniRule"/>
</dbReference>
<dbReference type="Gene3D" id="3.90.226.10">
    <property type="entry name" value="2-enoyl-CoA Hydratase, Chain A, domain 1"/>
    <property type="match status" value="1"/>
</dbReference>
<dbReference type="HAMAP" id="MF_01395">
    <property type="entry name" value="AcetylCoA_CT_beta"/>
    <property type="match status" value="1"/>
</dbReference>
<dbReference type="InterPro" id="IPR034733">
    <property type="entry name" value="AcCoA_carboxyl_beta"/>
</dbReference>
<dbReference type="InterPro" id="IPR000438">
    <property type="entry name" value="Acetyl_CoA_COase_Trfase_b_su"/>
</dbReference>
<dbReference type="InterPro" id="IPR029045">
    <property type="entry name" value="ClpP/crotonase-like_dom_sf"/>
</dbReference>
<dbReference type="InterPro" id="IPR011762">
    <property type="entry name" value="COA_CT_N"/>
</dbReference>
<dbReference type="NCBIfam" id="TIGR00515">
    <property type="entry name" value="accD"/>
    <property type="match status" value="1"/>
</dbReference>
<dbReference type="PANTHER" id="PTHR42995">
    <property type="entry name" value="ACETYL-COENZYME A CARBOXYLASE CARBOXYL TRANSFERASE SUBUNIT BETA, CHLOROPLASTIC"/>
    <property type="match status" value="1"/>
</dbReference>
<dbReference type="PANTHER" id="PTHR42995:SF5">
    <property type="entry name" value="ACETYL-COENZYME A CARBOXYLASE CARBOXYL TRANSFERASE SUBUNIT BETA, CHLOROPLASTIC"/>
    <property type="match status" value="1"/>
</dbReference>
<dbReference type="Pfam" id="PF01039">
    <property type="entry name" value="Carboxyl_trans"/>
    <property type="match status" value="1"/>
</dbReference>
<dbReference type="PRINTS" id="PR01070">
    <property type="entry name" value="ACCCTRFRASEB"/>
</dbReference>
<dbReference type="SUPFAM" id="SSF52096">
    <property type="entry name" value="ClpP/crotonase"/>
    <property type="match status" value="1"/>
</dbReference>
<dbReference type="PROSITE" id="PS50980">
    <property type="entry name" value="COA_CT_NTER"/>
    <property type="match status" value="1"/>
</dbReference>
<keyword id="KW-0067">ATP-binding</keyword>
<keyword id="KW-0963">Cytoplasm</keyword>
<keyword id="KW-0275">Fatty acid biosynthesis</keyword>
<keyword id="KW-0276">Fatty acid metabolism</keyword>
<keyword id="KW-0444">Lipid biosynthesis</keyword>
<keyword id="KW-0443">Lipid metabolism</keyword>
<keyword id="KW-0547">Nucleotide-binding</keyword>
<keyword id="KW-0808">Transferase</keyword>
<protein>
    <recommendedName>
        <fullName evidence="1">Acetyl-coenzyme A carboxylase carboxyl transferase subunit beta</fullName>
        <shortName evidence="1">ACCase subunit beta</shortName>
        <shortName evidence="1">Acetyl-CoA carboxylase carboxyltransferase subunit beta</shortName>
        <ecNumber evidence="1">2.1.3.15</ecNumber>
    </recommendedName>
</protein>
<name>ACCD_RHOP5</name>
<comment type="function">
    <text evidence="1">Component of the acetyl coenzyme A carboxylase (ACC) complex. Biotin carboxylase (BC) catalyzes the carboxylation of biotin on its carrier protein (BCCP) and then the CO(2) group is transferred by the transcarboxylase to acetyl-CoA to form malonyl-CoA.</text>
</comment>
<comment type="catalytic activity">
    <reaction evidence="1">
        <text>N(6)-carboxybiotinyl-L-lysyl-[protein] + acetyl-CoA = N(6)-biotinyl-L-lysyl-[protein] + malonyl-CoA</text>
        <dbReference type="Rhea" id="RHEA:54728"/>
        <dbReference type="Rhea" id="RHEA-COMP:10505"/>
        <dbReference type="Rhea" id="RHEA-COMP:10506"/>
        <dbReference type="ChEBI" id="CHEBI:57288"/>
        <dbReference type="ChEBI" id="CHEBI:57384"/>
        <dbReference type="ChEBI" id="CHEBI:83144"/>
        <dbReference type="ChEBI" id="CHEBI:83145"/>
        <dbReference type="EC" id="2.1.3.15"/>
    </reaction>
</comment>
<comment type="pathway">
    <text evidence="1">Lipid metabolism; malonyl-CoA biosynthesis; malonyl-CoA from acetyl-CoA: step 1/1.</text>
</comment>
<comment type="subunit">
    <text evidence="1">Acetyl-CoA carboxylase is a heterohexamer composed of biotin carboxyl carrier protein (AccB), biotin carboxylase (AccC) and two subunits each of ACCase subunit alpha (AccA) and ACCase subunit beta (AccD).</text>
</comment>
<comment type="subcellular location">
    <subcellularLocation>
        <location evidence="1">Cytoplasm</location>
    </subcellularLocation>
</comment>
<comment type="similarity">
    <text evidence="1">Belongs to the AccD/PCCB family.</text>
</comment>
<sequence length="325" mass="35560">MNWLTNVVRPKIRNILRRETPENLWIKCPDSGHLVFYKDVEANQFVIPGSNYHMRMGAVARLKSVFDGETWYDIALPEVTADPLKFRDERRYVDRIKDARAKTGLHDAVKVGYGKLENFPVVIAVQDFDFMGGSLGMAAGEAIVRGMELALEKRAPFILFAASGGARMQEGILSLMQMPRTTVGVQMLREAKLPYIVVLTNPTTGGVTASYAMLGDVQLAEPGALIGFAGARVIEQTIREKLPEGFQRAEYLRDHGMVDIVVHRHDLRSTLARLCRILTKSPAAEIEVVTPEPEPVAEAAVVLPAEAVAPPPAAEAAAPPATPPA</sequence>
<accession>Q07UG9</accession>
<evidence type="ECO:0000255" key="1">
    <source>
        <dbReference type="HAMAP-Rule" id="MF_01395"/>
    </source>
</evidence>
<evidence type="ECO:0000255" key="2">
    <source>
        <dbReference type="PROSITE-ProRule" id="PRU01136"/>
    </source>
</evidence>
<feature type="chain" id="PRO_0000389834" description="Acetyl-coenzyme A carboxylase carboxyl transferase subunit beta">
    <location>
        <begin position="1"/>
        <end position="325"/>
    </location>
</feature>
<feature type="domain" description="CoA carboxyltransferase N-terminal" evidence="2">
    <location>
        <begin position="24"/>
        <end position="293"/>
    </location>
</feature>
<organism>
    <name type="scientific">Rhodopseudomonas palustris (strain BisA53)</name>
    <dbReference type="NCBI Taxonomy" id="316055"/>
    <lineage>
        <taxon>Bacteria</taxon>
        <taxon>Pseudomonadati</taxon>
        <taxon>Pseudomonadota</taxon>
        <taxon>Alphaproteobacteria</taxon>
        <taxon>Hyphomicrobiales</taxon>
        <taxon>Nitrobacteraceae</taxon>
        <taxon>Rhodopseudomonas</taxon>
    </lineage>
</organism>
<proteinExistence type="inferred from homology"/>